<keyword id="KW-0233">DNA recombination</keyword>
<keyword id="KW-1185">Reference proteome</keyword>
<keyword id="KW-0814">Transposable element</keyword>
<keyword id="KW-0815">Transposition</keyword>
<proteinExistence type="inferred from homology"/>
<dbReference type="EMBL" id="X52537">
    <property type="protein sequence ID" value="CAA36773.1"/>
    <property type="molecule type" value="Genomic_DNA"/>
</dbReference>
<dbReference type="EMBL" id="U18997">
    <property type="protein sequence ID" value="AAA58242.1"/>
    <property type="molecule type" value="Genomic_DNA"/>
</dbReference>
<dbReference type="EMBL" id="U00096">
    <property type="protein sequence ID" value="AAC76469.1"/>
    <property type="molecule type" value="Genomic_DNA"/>
</dbReference>
<dbReference type="EMBL" id="AP009048">
    <property type="protein sequence ID" value="BAE77849.1"/>
    <property type="molecule type" value="Genomic_DNA"/>
</dbReference>
<dbReference type="RefSeq" id="NP_417901.1">
    <property type="nucleotide sequence ID" value="NC_000913.3"/>
</dbReference>
<dbReference type="SMR" id="P0CF12"/>
<dbReference type="FunCoup" id="P0CF12">
    <property type="interactions" value="10"/>
</dbReference>
<dbReference type="DNASU" id="948449"/>
<dbReference type="EnsemblBacteria" id="AAC76469">
    <property type="protein sequence ID" value="AAC76469"/>
    <property type="gene ID" value="b3444"/>
</dbReference>
<dbReference type="GeneID" id="947950"/>
<dbReference type="KEGG" id="ecj:JW3408"/>
<dbReference type="KEGG" id="eco:b0022"/>
<dbReference type="KEGG" id="eco:b1894"/>
<dbReference type="KEGG" id="eco:b3444"/>
<dbReference type="KEGG" id="ecoc:C3026_00105"/>
<dbReference type="PATRIC" id="fig|511145.12.peg.19"/>
<dbReference type="EchoBASE" id="EB4729"/>
<dbReference type="HOGENOM" id="CLU_076276_6_3_6"/>
<dbReference type="InParanoid" id="P0CF12"/>
<dbReference type="OMA" id="HCKSEDL"/>
<dbReference type="PhylomeDB" id="P0CF12"/>
<dbReference type="BioCyc" id="EcoCyc:MONOMER0-4226"/>
<dbReference type="PRO" id="PR:P0CF12"/>
<dbReference type="Proteomes" id="UP000000625">
    <property type="component" value="Chromosome"/>
</dbReference>
<dbReference type="GO" id="GO:0006313">
    <property type="term" value="P:DNA transposition"/>
    <property type="evidence" value="ECO:0000318"/>
    <property type="project" value="GO_Central"/>
</dbReference>
<dbReference type="InterPro" id="IPR024431">
    <property type="entry name" value="InsA_HTH_dom"/>
</dbReference>
<dbReference type="InterPro" id="IPR003220">
    <property type="entry name" value="InsA_N_dom_Znf"/>
</dbReference>
<dbReference type="InterPro" id="IPR051252">
    <property type="entry name" value="IS1_transposase_InsA"/>
</dbReference>
<dbReference type="PANTHER" id="PTHR47923">
    <property type="entry name" value="INSERTION ELEMENT IS1 1 PROTEIN INSA-RELATED"/>
    <property type="match status" value="1"/>
</dbReference>
<dbReference type="PANTHER" id="PTHR47923:SF1">
    <property type="entry name" value="INSERTION ELEMENT IS1 1 PROTEIN INSA-RELATED"/>
    <property type="match status" value="1"/>
</dbReference>
<dbReference type="Pfam" id="PF12759">
    <property type="entry name" value="HTH_Tnp_IS1"/>
    <property type="match status" value="1"/>
</dbReference>
<dbReference type="Pfam" id="PF03811">
    <property type="entry name" value="Zn_ribbon_InsA"/>
    <property type="match status" value="1"/>
</dbReference>
<organism>
    <name type="scientific">Escherichia coli (strain K12)</name>
    <dbReference type="NCBI Taxonomy" id="83333"/>
    <lineage>
        <taxon>Bacteria</taxon>
        <taxon>Pseudomonadati</taxon>
        <taxon>Pseudomonadota</taxon>
        <taxon>Gammaproteobacteria</taxon>
        <taxon>Enterobacterales</taxon>
        <taxon>Enterobacteriaceae</taxon>
        <taxon>Escherichia</taxon>
    </lineage>
</organism>
<feature type="chain" id="PRO_0000393354" description="Insertion element IS1 6 protein InsA">
    <location>
        <begin position="1"/>
        <end position="91"/>
    </location>
</feature>
<comment type="function">
    <text>Absolutely required for transposition of IS1.</text>
</comment>
<comment type="similarity">
    <text evidence="1">Belongs to the IS1 elements InsA family.</text>
</comment>
<accession>P0CF12</accession>
<accession>P03827</accession>
<accession>P0ADH0</accession>
<accession>P0C650</accession>
<accession>Q2EER2</accession>
<accession>Q2MCF5</accession>
<accession>Q2MCH2</accession>
<accession>Q933I5</accession>
<evidence type="ECO:0000305" key="1"/>
<gene>
    <name type="primary">insA6</name>
    <name type="ordered locus">b3444</name>
    <name type="ordered locus">JW3408</name>
</gene>
<protein>
    <recommendedName>
        <fullName>Insertion element IS1 6 protein InsA</fullName>
    </recommendedName>
    <alternativeName>
        <fullName>IS1e</fullName>
    </alternativeName>
</protein>
<name>INSA6_ECOLI</name>
<sequence length="91" mass="9868">MASVSISCPSCSATDGVVRNGKSTAGHQRYLCSHCRKTWQLQFTYTASQPGTHQKIIDMAMNGVGCRATARIMGVGLNTILRHLKNSGRSR</sequence>
<reference key="1">
    <citation type="journal article" date="1991" name="Gene">
        <title>Four types of IS1 with differences in nucleotide sequence reside in the Escherichia coli K-12 chromosome.</title>
        <authorList>
            <person name="Umeda M."/>
            <person name="Ohtsubo E."/>
        </authorList>
    </citation>
    <scope>NUCLEOTIDE SEQUENCE [GENOMIC DNA]</scope>
    <source>
        <strain>K12 / W3110 / ATCC 27325 / DSM 5911</strain>
    </source>
</reference>
<reference key="2">
    <citation type="journal article" date="1997" name="Science">
        <title>The complete genome sequence of Escherichia coli K-12.</title>
        <authorList>
            <person name="Blattner F.R."/>
            <person name="Plunkett G. III"/>
            <person name="Bloch C.A."/>
            <person name="Perna N.T."/>
            <person name="Burland V."/>
            <person name="Riley M."/>
            <person name="Collado-Vides J."/>
            <person name="Glasner J.D."/>
            <person name="Rode C.K."/>
            <person name="Mayhew G.F."/>
            <person name="Gregor J."/>
            <person name="Davis N.W."/>
            <person name="Kirkpatrick H.A."/>
            <person name="Goeden M.A."/>
            <person name="Rose D.J."/>
            <person name="Mau B."/>
            <person name="Shao Y."/>
        </authorList>
    </citation>
    <scope>NUCLEOTIDE SEQUENCE [LARGE SCALE GENOMIC DNA]</scope>
    <source>
        <strain>K12 / MG1655 / ATCC 47076</strain>
    </source>
</reference>
<reference key="3">
    <citation type="journal article" date="2006" name="Mol. Syst. Biol.">
        <title>Highly accurate genome sequences of Escherichia coli K-12 strains MG1655 and W3110.</title>
        <authorList>
            <person name="Hayashi K."/>
            <person name="Morooka N."/>
            <person name="Yamamoto Y."/>
            <person name="Fujita K."/>
            <person name="Isono K."/>
            <person name="Choi S."/>
            <person name="Ohtsubo E."/>
            <person name="Baba T."/>
            <person name="Wanner B.L."/>
            <person name="Mori H."/>
            <person name="Horiuchi T."/>
        </authorList>
    </citation>
    <scope>NUCLEOTIDE SEQUENCE [LARGE SCALE GENOMIC DNA]</scope>
    <source>
        <strain>K12 / W3110 / ATCC 27325 / DSM 5911</strain>
    </source>
</reference>